<feature type="peptide" id="PRO_0000044093" description="Phasvatocin">
    <location>
        <begin position="1"/>
        <end position="9"/>
    </location>
</feature>
<feature type="modified residue" description="Glycine amide" evidence="1">
    <location>
        <position position="9"/>
    </location>
</feature>
<feature type="disulfide bond">
    <location>
        <begin position="1"/>
        <end position="6"/>
    </location>
</feature>
<sequence>CYFNNCPVG</sequence>
<reference key="1">
    <citation type="journal article" date="1994" name="Proc. Natl. Acad. Sci. U.S.A.">
        <title>Special evolution of neurohypophysial hormones in cartilaginous fishes: asvatocin and phasvatocin, two oxytocin-like peptides isolated from the spotted dogfish (Scyliorhinus caniculus).</title>
        <authorList>
            <person name="Chauvet J."/>
            <person name="Rouille Y."/>
            <person name="Chauveau C."/>
            <person name="Chauvet M.-T."/>
            <person name="Acher R."/>
        </authorList>
    </citation>
    <scope>PROTEIN SEQUENCE</scope>
    <scope>AMIDATION AT GLY-9</scope>
    <source>
        <tissue>Pituitary</tissue>
    </source>
</reference>
<protein>
    <recommendedName>
        <fullName>Phasvatocin</fullName>
    </recommendedName>
</protein>
<comment type="function">
    <text>Displays oxytocic activity on rat uterus.</text>
</comment>
<comment type="subcellular location">
    <subcellularLocation>
        <location>Secreted</location>
    </subcellularLocation>
</comment>
<comment type="similarity">
    <text evidence="2">Belongs to the vasopressin/oxytocin family.</text>
</comment>
<name>OXYF_SCYCA</name>
<evidence type="ECO:0000269" key="1">
    <source>
    </source>
</evidence>
<evidence type="ECO:0000305" key="2"/>
<organism>
    <name type="scientific">Scyliorhinus canicula</name>
    <name type="common">Small-spotted catshark</name>
    <name type="synonym">Squalus canicula</name>
    <dbReference type="NCBI Taxonomy" id="7830"/>
    <lineage>
        <taxon>Eukaryota</taxon>
        <taxon>Metazoa</taxon>
        <taxon>Chordata</taxon>
        <taxon>Craniata</taxon>
        <taxon>Vertebrata</taxon>
        <taxon>Chondrichthyes</taxon>
        <taxon>Elasmobranchii</taxon>
        <taxon>Galeomorphii</taxon>
        <taxon>Galeoidea</taxon>
        <taxon>Carcharhiniformes</taxon>
        <taxon>Scyliorhinidae</taxon>
        <taxon>Scyliorhinus</taxon>
    </lineage>
</organism>
<proteinExistence type="evidence at protein level"/>
<keyword id="KW-0027">Amidation</keyword>
<keyword id="KW-0903">Direct protein sequencing</keyword>
<keyword id="KW-1015">Disulfide bond</keyword>
<keyword id="KW-0372">Hormone</keyword>
<keyword id="KW-0964">Secreted</keyword>
<accession>P42997</accession>
<dbReference type="GO" id="GO:0005576">
    <property type="term" value="C:extracellular region"/>
    <property type="evidence" value="ECO:0007669"/>
    <property type="project" value="UniProtKB-SubCell"/>
</dbReference>
<dbReference type="GO" id="GO:0005185">
    <property type="term" value="F:neurohypophyseal hormone activity"/>
    <property type="evidence" value="ECO:0007669"/>
    <property type="project" value="InterPro"/>
</dbReference>
<dbReference type="InterPro" id="IPR022423">
    <property type="entry name" value="Neurohypophysial_hormone_CS"/>
</dbReference>
<dbReference type="PROSITE" id="PS00264">
    <property type="entry name" value="NEUROHYPOPHYS_HORM"/>
    <property type="match status" value="1"/>
</dbReference>